<keyword id="KW-0963">Cytoplasm</keyword>
<keyword id="KW-0489">Methyltransferase</keyword>
<keyword id="KW-0698">rRNA processing</keyword>
<keyword id="KW-0949">S-adenosyl-L-methionine</keyword>
<keyword id="KW-0808">Transferase</keyword>
<accession>Q636A8</accession>
<organism>
    <name type="scientific">Bacillus cereus (strain ZK / E33L)</name>
    <dbReference type="NCBI Taxonomy" id="288681"/>
    <lineage>
        <taxon>Bacteria</taxon>
        <taxon>Bacillati</taxon>
        <taxon>Bacillota</taxon>
        <taxon>Bacilli</taxon>
        <taxon>Bacillales</taxon>
        <taxon>Bacillaceae</taxon>
        <taxon>Bacillus</taxon>
        <taxon>Bacillus cereus group</taxon>
    </lineage>
</organism>
<protein>
    <recommendedName>
        <fullName evidence="1">Ribosomal RNA small subunit methyltransferase H</fullName>
        <ecNumber evidence="1">2.1.1.199</ecNumber>
    </recommendedName>
    <alternativeName>
        <fullName evidence="1">16S rRNA m(4)C1402 methyltransferase</fullName>
    </alternativeName>
    <alternativeName>
        <fullName evidence="1">rRNA (cytosine-N(4)-)-methyltransferase RsmH</fullName>
    </alternativeName>
</protein>
<feature type="chain" id="PRO_0000108572" description="Ribosomal RNA small subunit methyltransferase H">
    <location>
        <begin position="1"/>
        <end position="310"/>
    </location>
</feature>
<feature type="binding site" evidence="1">
    <location>
        <begin position="32"/>
        <end position="34"/>
    </location>
    <ligand>
        <name>S-adenosyl-L-methionine</name>
        <dbReference type="ChEBI" id="CHEBI:59789"/>
    </ligand>
</feature>
<feature type="binding site" evidence="1">
    <location>
        <position position="52"/>
    </location>
    <ligand>
        <name>S-adenosyl-L-methionine</name>
        <dbReference type="ChEBI" id="CHEBI:59789"/>
    </ligand>
</feature>
<feature type="binding site" evidence="1">
    <location>
        <position position="79"/>
    </location>
    <ligand>
        <name>S-adenosyl-L-methionine</name>
        <dbReference type="ChEBI" id="CHEBI:59789"/>
    </ligand>
</feature>
<feature type="binding site" evidence="1">
    <location>
        <position position="100"/>
    </location>
    <ligand>
        <name>S-adenosyl-L-methionine</name>
        <dbReference type="ChEBI" id="CHEBI:59789"/>
    </ligand>
</feature>
<feature type="binding site" evidence="1">
    <location>
        <position position="107"/>
    </location>
    <ligand>
        <name>S-adenosyl-L-methionine</name>
        <dbReference type="ChEBI" id="CHEBI:59789"/>
    </ligand>
</feature>
<gene>
    <name evidence="1" type="primary">rsmH</name>
    <name type="synonym">mraW</name>
    <name type="ordered locus">BCE33L3677</name>
</gene>
<evidence type="ECO:0000255" key="1">
    <source>
        <dbReference type="HAMAP-Rule" id="MF_01007"/>
    </source>
</evidence>
<sequence>MFNHVTVLLKETVDGLDIKPDGTYVDCTLGGGGHSSYLLSQLTEGGRLIAFDQDEIAIQNAKEKFSSYGEQFITVKSNFRYLSEKLQELGITEVDGILFDLGVSSPQLDTPERGFSYHHDAPLDMRMDQDAPLTAYDVVNSWSYEQLVRIFFQYGEEKFSKQIARKIEAYRENKAIETTGELVELIKEGIPAPARRTGGHPAKRVFQAIRIAVNDELKVFEEALESAIEMVKPGGRVSVITFHSLEDRICKTTFKRNSTTPQLPPGLPIIPDEFKPKLKLITRKPILPSDIELEENNRARSAKLRIAEKR</sequence>
<proteinExistence type="inferred from homology"/>
<comment type="function">
    <text evidence="1">Specifically methylates the N4 position of cytidine in position 1402 (C1402) of 16S rRNA.</text>
</comment>
<comment type="catalytic activity">
    <reaction evidence="1">
        <text>cytidine(1402) in 16S rRNA + S-adenosyl-L-methionine = N(4)-methylcytidine(1402) in 16S rRNA + S-adenosyl-L-homocysteine + H(+)</text>
        <dbReference type="Rhea" id="RHEA:42928"/>
        <dbReference type="Rhea" id="RHEA-COMP:10286"/>
        <dbReference type="Rhea" id="RHEA-COMP:10287"/>
        <dbReference type="ChEBI" id="CHEBI:15378"/>
        <dbReference type="ChEBI" id="CHEBI:57856"/>
        <dbReference type="ChEBI" id="CHEBI:59789"/>
        <dbReference type="ChEBI" id="CHEBI:74506"/>
        <dbReference type="ChEBI" id="CHEBI:82748"/>
        <dbReference type="EC" id="2.1.1.199"/>
    </reaction>
</comment>
<comment type="subcellular location">
    <subcellularLocation>
        <location evidence="1">Cytoplasm</location>
    </subcellularLocation>
</comment>
<comment type="similarity">
    <text evidence="1">Belongs to the methyltransferase superfamily. RsmH family.</text>
</comment>
<name>RSMH_BACCZ</name>
<dbReference type="EC" id="2.1.1.199" evidence="1"/>
<dbReference type="EMBL" id="CP000001">
    <property type="protein sequence ID" value="AAU16589.1"/>
    <property type="molecule type" value="Genomic_DNA"/>
</dbReference>
<dbReference type="RefSeq" id="WP_000481786.1">
    <property type="nucleotide sequence ID" value="NZ_CP009968.1"/>
</dbReference>
<dbReference type="SMR" id="Q636A8"/>
<dbReference type="GeneID" id="45023747"/>
<dbReference type="KEGG" id="bcz:BCE33L3677"/>
<dbReference type="PATRIC" id="fig|288681.22.peg.1734"/>
<dbReference type="Proteomes" id="UP000002612">
    <property type="component" value="Chromosome"/>
</dbReference>
<dbReference type="GO" id="GO:0005737">
    <property type="term" value="C:cytoplasm"/>
    <property type="evidence" value="ECO:0007669"/>
    <property type="project" value="UniProtKB-SubCell"/>
</dbReference>
<dbReference type="GO" id="GO:0071424">
    <property type="term" value="F:rRNA (cytosine-N4-)-methyltransferase activity"/>
    <property type="evidence" value="ECO:0007669"/>
    <property type="project" value="UniProtKB-UniRule"/>
</dbReference>
<dbReference type="GO" id="GO:0070475">
    <property type="term" value="P:rRNA base methylation"/>
    <property type="evidence" value="ECO:0007669"/>
    <property type="project" value="UniProtKB-UniRule"/>
</dbReference>
<dbReference type="FunFam" id="1.10.150.170:FF:000001">
    <property type="entry name" value="Ribosomal RNA small subunit methyltransferase H"/>
    <property type="match status" value="1"/>
</dbReference>
<dbReference type="Gene3D" id="1.10.150.170">
    <property type="entry name" value="Putative methyltransferase TM0872, insert domain"/>
    <property type="match status" value="1"/>
</dbReference>
<dbReference type="Gene3D" id="3.40.50.150">
    <property type="entry name" value="Vaccinia Virus protein VP39"/>
    <property type="match status" value="1"/>
</dbReference>
<dbReference type="HAMAP" id="MF_01007">
    <property type="entry name" value="16SrRNA_methyltr_H"/>
    <property type="match status" value="1"/>
</dbReference>
<dbReference type="InterPro" id="IPR002903">
    <property type="entry name" value="RsmH"/>
</dbReference>
<dbReference type="InterPro" id="IPR023397">
    <property type="entry name" value="SAM-dep_MeTrfase_MraW_recog"/>
</dbReference>
<dbReference type="InterPro" id="IPR029063">
    <property type="entry name" value="SAM-dependent_MTases_sf"/>
</dbReference>
<dbReference type="NCBIfam" id="TIGR00006">
    <property type="entry name" value="16S rRNA (cytosine(1402)-N(4))-methyltransferase RsmH"/>
    <property type="match status" value="1"/>
</dbReference>
<dbReference type="PANTHER" id="PTHR11265:SF0">
    <property type="entry name" value="12S RRNA N4-METHYLCYTIDINE METHYLTRANSFERASE"/>
    <property type="match status" value="1"/>
</dbReference>
<dbReference type="PANTHER" id="PTHR11265">
    <property type="entry name" value="S-ADENOSYL-METHYLTRANSFERASE MRAW"/>
    <property type="match status" value="1"/>
</dbReference>
<dbReference type="Pfam" id="PF01795">
    <property type="entry name" value="Methyltransf_5"/>
    <property type="match status" value="1"/>
</dbReference>
<dbReference type="PIRSF" id="PIRSF004486">
    <property type="entry name" value="MraW"/>
    <property type="match status" value="1"/>
</dbReference>
<dbReference type="SUPFAM" id="SSF81799">
    <property type="entry name" value="Putative methyltransferase TM0872, insert domain"/>
    <property type="match status" value="1"/>
</dbReference>
<dbReference type="SUPFAM" id="SSF53335">
    <property type="entry name" value="S-adenosyl-L-methionine-dependent methyltransferases"/>
    <property type="match status" value="1"/>
</dbReference>
<reference key="1">
    <citation type="journal article" date="2006" name="J. Bacteriol.">
        <title>Pathogenomic sequence analysis of Bacillus cereus and Bacillus thuringiensis isolates closely related to Bacillus anthracis.</title>
        <authorList>
            <person name="Han C.S."/>
            <person name="Xie G."/>
            <person name="Challacombe J.F."/>
            <person name="Altherr M.R."/>
            <person name="Bhotika S.S."/>
            <person name="Bruce D."/>
            <person name="Campbell C.S."/>
            <person name="Campbell M.L."/>
            <person name="Chen J."/>
            <person name="Chertkov O."/>
            <person name="Cleland C."/>
            <person name="Dimitrijevic M."/>
            <person name="Doggett N.A."/>
            <person name="Fawcett J.J."/>
            <person name="Glavina T."/>
            <person name="Goodwin L.A."/>
            <person name="Hill K.K."/>
            <person name="Hitchcock P."/>
            <person name="Jackson P.J."/>
            <person name="Keim P."/>
            <person name="Kewalramani A.R."/>
            <person name="Longmire J."/>
            <person name="Lucas S."/>
            <person name="Malfatti S."/>
            <person name="McMurry K."/>
            <person name="Meincke L.J."/>
            <person name="Misra M."/>
            <person name="Moseman B.L."/>
            <person name="Mundt M."/>
            <person name="Munk A.C."/>
            <person name="Okinaka R.T."/>
            <person name="Parson-Quintana B."/>
            <person name="Reilly L.P."/>
            <person name="Richardson P."/>
            <person name="Robinson D.L."/>
            <person name="Rubin E."/>
            <person name="Saunders E."/>
            <person name="Tapia R."/>
            <person name="Tesmer J.G."/>
            <person name="Thayer N."/>
            <person name="Thompson L.S."/>
            <person name="Tice H."/>
            <person name="Ticknor L.O."/>
            <person name="Wills P.L."/>
            <person name="Brettin T.S."/>
            <person name="Gilna P."/>
        </authorList>
    </citation>
    <scope>NUCLEOTIDE SEQUENCE [LARGE SCALE GENOMIC DNA]</scope>
    <source>
        <strain>ZK / E33L</strain>
    </source>
</reference>